<name>PDXB_YERP3</name>
<accession>A7FGL9</accession>
<keyword id="KW-0963">Cytoplasm</keyword>
<keyword id="KW-0520">NAD</keyword>
<keyword id="KW-0560">Oxidoreductase</keyword>
<keyword id="KW-0664">Pyridoxine biosynthesis</keyword>
<protein>
    <recommendedName>
        <fullName evidence="1">Erythronate-4-phosphate dehydrogenase</fullName>
        <ecNumber evidence="1">1.1.1.290</ecNumber>
    </recommendedName>
</protein>
<dbReference type="EC" id="1.1.1.290" evidence="1"/>
<dbReference type="EMBL" id="CP000720">
    <property type="protein sequence ID" value="ABS45986.1"/>
    <property type="molecule type" value="Genomic_DNA"/>
</dbReference>
<dbReference type="RefSeq" id="WP_002209725.1">
    <property type="nucleotide sequence ID" value="NC_009708.1"/>
</dbReference>
<dbReference type="SMR" id="A7FGL9"/>
<dbReference type="GeneID" id="57975926"/>
<dbReference type="KEGG" id="ypi:YpsIP31758_1418"/>
<dbReference type="HOGENOM" id="CLU_019796_4_0_6"/>
<dbReference type="UniPathway" id="UPA00244">
    <property type="reaction ID" value="UER00310"/>
</dbReference>
<dbReference type="Proteomes" id="UP000002412">
    <property type="component" value="Chromosome"/>
</dbReference>
<dbReference type="GO" id="GO:0005829">
    <property type="term" value="C:cytosol"/>
    <property type="evidence" value="ECO:0007669"/>
    <property type="project" value="TreeGrafter"/>
</dbReference>
<dbReference type="GO" id="GO:0033711">
    <property type="term" value="F:4-phosphoerythronate dehydrogenase activity"/>
    <property type="evidence" value="ECO:0007669"/>
    <property type="project" value="UniProtKB-EC"/>
</dbReference>
<dbReference type="GO" id="GO:0051287">
    <property type="term" value="F:NAD binding"/>
    <property type="evidence" value="ECO:0007669"/>
    <property type="project" value="InterPro"/>
</dbReference>
<dbReference type="GO" id="GO:0046983">
    <property type="term" value="F:protein dimerization activity"/>
    <property type="evidence" value="ECO:0007669"/>
    <property type="project" value="InterPro"/>
</dbReference>
<dbReference type="GO" id="GO:0036001">
    <property type="term" value="P:'de novo' pyridoxal 5'-phosphate biosynthetic process"/>
    <property type="evidence" value="ECO:0007669"/>
    <property type="project" value="TreeGrafter"/>
</dbReference>
<dbReference type="GO" id="GO:0008615">
    <property type="term" value="P:pyridoxine biosynthetic process"/>
    <property type="evidence" value="ECO:0007669"/>
    <property type="project" value="UniProtKB-UniRule"/>
</dbReference>
<dbReference type="CDD" id="cd12158">
    <property type="entry name" value="ErythrP_dh"/>
    <property type="match status" value="1"/>
</dbReference>
<dbReference type="FunFam" id="3.30.1370.170:FF:000001">
    <property type="entry name" value="Erythronate-4-phosphate dehydrogenase"/>
    <property type="match status" value="1"/>
</dbReference>
<dbReference type="FunFam" id="3.40.50.720:FF:000093">
    <property type="entry name" value="Erythronate-4-phosphate dehydrogenase"/>
    <property type="match status" value="1"/>
</dbReference>
<dbReference type="Gene3D" id="3.30.1370.170">
    <property type="match status" value="1"/>
</dbReference>
<dbReference type="Gene3D" id="3.40.50.720">
    <property type="entry name" value="NAD(P)-binding Rossmann-like Domain"/>
    <property type="match status" value="2"/>
</dbReference>
<dbReference type="HAMAP" id="MF_01825">
    <property type="entry name" value="PdxB"/>
    <property type="match status" value="1"/>
</dbReference>
<dbReference type="InterPro" id="IPR006139">
    <property type="entry name" value="D-isomer_2_OHA_DH_cat_dom"/>
</dbReference>
<dbReference type="InterPro" id="IPR029753">
    <property type="entry name" value="D-isomer_DH_CS"/>
</dbReference>
<dbReference type="InterPro" id="IPR029752">
    <property type="entry name" value="D-isomer_DH_CS1"/>
</dbReference>
<dbReference type="InterPro" id="IPR006140">
    <property type="entry name" value="D-isomer_DH_NAD-bd"/>
</dbReference>
<dbReference type="InterPro" id="IPR020921">
    <property type="entry name" value="Erythronate-4-P_DHase"/>
</dbReference>
<dbReference type="InterPro" id="IPR024531">
    <property type="entry name" value="Erythronate-4-P_DHase_dimer"/>
</dbReference>
<dbReference type="InterPro" id="IPR036291">
    <property type="entry name" value="NAD(P)-bd_dom_sf"/>
</dbReference>
<dbReference type="InterPro" id="IPR038251">
    <property type="entry name" value="PdxB_dimer_sf"/>
</dbReference>
<dbReference type="NCBIfam" id="NF001309">
    <property type="entry name" value="PRK00257.1"/>
    <property type="match status" value="1"/>
</dbReference>
<dbReference type="PANTHER" id="PTHR42938">
    <property type="entry name" value="FORMATE DEHYDROGENASE 1"/>
    <property type="match status" value="1"/>
</dbReference>
<dbReference type="PANTHER" id="PTHR42938:SF9">
    <property type="entry name" value="FORMATE DEHYDROGENASE 1"/>
    <property type="match status" value="1"/>
</dbReference>
<dbReference type="Pfam" id="PF00389">
    <property type="entry name" value="2-Hacid_dh"/>
    <property type="match status" value="1"/>
</dbReference>
<dbReference type="Pfam" id="PF02826">
    <property type="entry name" value="2-Hacid_dh_C"/>
    <property type="match status" value="1"/>
</dbReference>
<dbReference type="Pfam" id="PF11890">
    <property type="entry name" value="DUF3410"/>
    <property type="match status" value="1"/>
</dbReference>
<dbReference type="SUPFAM" id="SSF52283">
    <property type="entry name" value="Formate/glycerate dehydrogenase catalytic domain-like"/>
    <property type="match status" value="1"/>
</dbReference>
<dbReference type="SUPFAM" id="SSF51735">
    <property type="entry name" value="NAD(P)-binding Rossmann-fold domains"/>
    <property type="match status" value="1"/>
</dbReference>
<dbReference type="PROSITE" id="PS00065">
    <property type="entry name" value="D_2_HYDROXYACID_DH_1"/>
    <property type="match status" value="1"/>
</dbReference>
<dbReference type="PROSITE" id="PS00671">
    <property type="entry name" value="D_2_HYDROXYACID_DH_3"/>
    <property type="match status" value="1"/>
</dbReference>
<proteinExistence type="inferred from homology"/>
<gene>
    <name evidence="1" type="primary">pdxB</name>
    <name type="ordered locus">YpsIP31758_1418</name>
</gene>
<organism>
    <name type="scientific">Yersinia pseudotuberculosis serotype O:1b (strain IP 31758)</name>
    <dbReference type="NCBI Taxonomy" id="349747"/>
    <lineage>
        <taxon>Bacteria</taxon>
        <taxon>Pseudomonadati</taxon>
        <taxon>Pseudomonadota</taxon>
        <taxon>Gammaproteobacteria</taxon>
        <taxon>Enterobacterales</taxon>
        <taxon>Yersiniaceae</taxon>
        <taxon>Yersinia</taxon>
    </lineage>
</organism>
<sequence length="375" mass="41167">MKILVDENMPYAEELFRRLGDVQAVPGRPIPRDALVDADALMVRSVTKVNEALLHGTSIGFVGTATAGTDHVDDTWLRQQGIGFSAAPGCNAIAVVEYVFSALMMMAERDGFQLRDKTVGIIGVGNVGSRLNARLQALGVRTLLCDPPRADRGDNEAFWPLEKLVREADVLTFHTPLNKTGAYQSLHMADDELLAALPDGRILINACRGAVVDNAALLRALEKGKKLSVVLDVWEPEPDLSLPLLARVDIGTPHIAGYTLEGKARGTTQVFEAFSQHLGQPQSVELASLLPVPEFSHLRLNGELDEGKLKRLMHLVYDVRRDDAPLRHVAGLPGEFDRLRKHYQERREWSSLCVQCDDATSAGLLQQLGFTTQLL</sequence>
<evidence type="ECO:0000255" key="1">
    <source>
        <dbReference type="HAMAP-Rule" id="MF_01825"/>
    </source>
</evidence>
<feature type="chain" id="PRO_1000088431" description="Erythronate-4-phosphate dehydrogenase">
    <location>
        <begin position="1"/>
        <end position="375"/>
    </location>
</feature>
<feature type="active site" evidence="1">
    <location>
        <position position="208"/>
    </location>
</feature>
<feature type="active site" evidence="1">
    <location>
        <position position="237"/>
    </location>
</feature>
<feature type="active site" description="Proton donor" evidence="1">
    <location>
        <position position="254"/>
    </location>
</feature>
<feature type="binding site" evidence="1">
    <location>
        <position position="45"/>
    </location>
    <ligand>
        <name>substrate</name>
    </ligand>
</feature>
<feature type="binding site" evidence="1">
    <location>
        <position position="66"/>
    </location>
    <ligand>
        <name>substrate</name>
    </ligand>
</feature>
<feature type="binding site" evidence="1">
    <location>
        <position position="146"/>
    </location>
    <ligand>
        <name>NAD(+)</name>
        <dbReference type="ChEBI" id="CHEBI:57540"/>
    </ligand>
</feature>
<feature type="binding site" evidence="1">
    <location>
        <position position="175"/>
    </location>
    <ligand>
        <name>NAD(+)</name>
        <dbReference type="ChEBI" id="CHEBI:57540"/>
    </ligand>
</feature>
<feature type="binding site" evidence="1">
    <location>
        <position position="232"/>
    </location>
    <ligand>
        <name>NAD(+)</name>
        <dbReference type="ChEBI" id="CHEBI:57540"/>
    </ligand>
</feature>
<feature type="binding site" evidence="1">
    <location>
        <position position="257"/>
    </location>
    <ligand>
        <name>NAD(+)</name>
        <dbReference type="ChEBI" id="CHEBI:57540"/>
    </ligand>
</feature>
<feature type="binding site" evidence="1">
    <location>
        <position position="258"/>
    </location>
    <ligand>
        <name>substrate</name>
    </ligand>
</feature>
<reference key="1">
    <citation type="journal article" date="2007" name="PLoS Genet.">
        <title>The complete genome sequence of Yersinia pseudotuberculosis IP31758, the causative agent of Far East scarlet-like fever.</title>
        <authorList>
            <person name="Eppinger M."/>
            <person name="Rosovitz M.J."/>
            <person name="Fricke W.F."/>
            <person name="Rasko D.A."/>
            <person name="Kokorina G."/>
            <person name="Fayolle C."/>
            <person name="Lindler L.E."/>
            <person name="Carniel E."/>
            <person name="Ravel J."/>
        </authorList>
    </citation>
    <scope>NUCLEOTIDE SEQUENCE [LARGE SCALE GENOMIC DNA]</scope>
    <source>
        <strain>IP 31758</strain>
    </source>
</reference>
<comment type="function">
    <text evidence="1">Catalyzes the oxidation of erythronate-4-phosphate to 3-hydroxy-2-oxo-4-phosphonooxybutanoate.</text>
</comment>
<comment type="catalytic activity">
    <reaction evidence="1">
        <text>4-phospho-D-erythronate + NAD(+) = (R)-3-hydroxy-2-oxo-4-phosphooxybutanoate + NADH + H(+)</text>
        <dbReference type="Rhea" id="RHEA:18829"/>
        <dbReference type="ChEBI" id="CHEBI:15378"/>
        <dbReference type="ChEBI" id="CHEBI:57540"/>
        <dbReference type="ChEBI" id="CHEBI:57945"/>
        <dbReference type="ChEBI" id="CHEBI:58538"/>
        <dbReference type="ChEBI" id="CHEBI:58766"/>
        <dbReference type="EC" id="1.1.1.290"/>
    </reaction>
</comment>
<comment type="pathway">
    <text evidence="1">Cofactor biosynthesis; pyridoxine 5'-phosphate biosynthesis; pyridoxine 5'-phosphate from D-erythrose 4-phosphate: step 2/5.</text>
</comment>
<comment type="subunit">
    <text evidence="1">Homodimer.</text>
</comment>
<comment type="subcellular location">
    <subcellularLocation>
        <location evidence="1">Cytoplasm</location>
    </subcellularLocation>
</comment>
<comment type="similarity">
    <text evidence="1">Belongs to the D-isomer specific 2-hydroxyacid dehydrogenase family. PdxB subfamily.</text>
</comment>